<organism>
    <name type="scientific">Homo sapiens</name>
    <name type="common">Human</name>
    <dbReference type="NCBI Taxonomy" id="9606"/>
    <lineage>
        <taxon>Eukaryota</taxon>
        <taxon>Metazoa</taxon>
        <taxon>Chordata</taxon>
        <taxon>Craniata</taxon>
        <taxon>Vertebrata</taxon>
        <taxon>Euteleostomi</taxon>
        <taxon>Mammalia</taxon>
        <taxon>Eutheria</taxon>
        <taxon>Euarchontoglires</taxon>
        <taxon>Primates</taxon>
        <taxon>Haplorrhini</taxon>
        <taxon>Catarrhini</taxon>
        <taxon>Hominidae</taxon>
        <taxon>Homo</taxon>
    </lineage>
</organism>
<protein>
    <recommendedName>
        <fullName>Active regulator of SIRT1</fullName>
    </recommendedName>
    <alternativeName>
        <fullName>40S ribosomal protein S19-binding protein 1</fullName>
        <shortName>RPS19-binding protein 1</shortName>
        <shortName>S19BP</shortName>
    </alternativeName>
</protein>
<name>AROS_HUMAN</name>
<proteinExistence type="evidence at protein level"/>
<sequence>MSAALLRRGLELLAASEAPRDPPGQAKPRGAPVKRPRKTKAIQAQKLRNSAKGKVPKSALDEYRKRECRDHLRVNLKFLTRTRSTVAESVSQQILRQNRGRKACDRPVAKTKKKKAEGTVFTEEDFQKFQQEYFGS</sequence>
<keyword id="KW-0002">3D-structure</keyword>
<keyword id="KW-0164">Citrullination</keyword>
<keyword id="KW-0539">Nucleus</keyword>
<keyword id="KW-0597">Phosphoprotein</keyword>
<keyword id="KW-1267">Proteomics identification</keyword>
<keyword id="KW-1185">Reference proteome</keyword>
<feature type="chain" id="PRO_0000252393" description="Active regulator of SIRT1">
    <location>
        <begin position="1"/>
        <end position="136"/>
    </location>
</feature>
<feature type="region of interest" description="Disordered" evidence="2">
    <location>
        <begin position="13"/>
        <end position="58"/>
    </location>
</feature>
<feature type="modified residue" description="Citrulline" evidence="1">
    <location>
        <position position="7"/>
    </location>
</feature>
<feature type="modified residue" description="Phosphoserine" evidence="9">
    <location>
        <position position="84"/>
    </location>
</feature>
<feature type="sequence variant" id="VAR_051330" description="In dbSNP:rs17001278.">
    <original>E</original>
    <variation>A</variation>
    <location>
        <position position="124"/>
    </location>
</feature>
<gene>
    <name evidence="7" type="primary">RPS19BP1</name>
    <name evidence="5" type="synonym">AROS</name>
</gene>
<dbReference type="EMBL" id="CR456443">
    <property type="protein sequence ID" value="CAG30329.1"/>
    <property type="molecule type" value="mRNA"/>
</dbReference>
<dbReference type="EMBL" id="AL022312">
    <property type="status" value="NOT_ANNOTATED_CDS"/>
    <property type="molecule type" value="Genomic_DNA"/>
</dbReference>
<dbReference type="EMBL" id="CH471095">
    <property type="protein sequence ID" value="EAW60343.1"/>
    <property type="molecule type" value="Genomic_DNA"/>
</dbReference>
<dbReference type="EMBL" id="BC047711">
    <property type="protein sequence ID" value="AAH47711.1"/>
    <property type="molecule type" value="mRNA"/>
</dbReference>
<dbReference type="EMBL" id="BC037573">
    <property type="protein sequence ID" value="AAH37573.1"/>
    <property type="molecule type" value="mRNA"/>
</dbReference>
<dbReference type="CCDS" id="CCDS13997.1"/>
<dbReference type="RefSeq" id="NP_919307.1">
    <property type="nucleotide sequence ID" value="NM_194326.4"/>
</dbReference>
<dbReference type="PDB" id="7MQA">
    <property type="method" value="EM"/>
    <property type="resolution" value="2.70 A"/>
    <property type="chains" value="LY=1-136"/>
</dbReference>
<dbReference type="PDB" id="8BBK">
    <property type="method" value="X-ray"/>
    <property type="resolution" value="3.27 A"/>
    <property type="chains" value="G/H/I/J/K/L=1-136"/>
</dbReference>
<dbReference type="PDBsum" id="7MQA"/>
<dbReference type="PDBsum" id="8BBK"/>
<dbReference type="EMDB" id="EMD-23938"/>
<dbReference type="SMR" id="Q86WX3"/>
<dbReference type="BioGRID" id="124848">
    <property type="interactions" value="99"/>
</dbReference>
<dbReference type="FunCoup" id="Q86WX3">
    <property type="interactions" value="1743"/>
</dbReference>
<dbReference type="IntAct" id="Q86WX3">
    <property type="interactions" value="54"/>
</dbReference>
<dbReference type="MINT" id="Q86WX3"/>
<dbReference type="STRING" id="9606.ENSP00000333948"/>
<dbReference type="GlyGen" id="Q86WX3">
    <property type="glycosylation" value="1 site, 1 O-linked glycan (1 site)"/>
</dbReference>
<dbReference type="iPTMnet" id="Q86WX3"/>
<dbReference type="PhosphoSitePlus" id="Q86WX3"/>
<dbReference type="BioMuta" id="RPS19BP1"/>
<dbReference type="DMDM" id="74727734"/>
<dbReference type="jPOST" id="Q86WX3"/>
<dbReference type="MassIVE" id="Q86WX3"/>
<dbReference type="PaxDb" id="9606-ENSP00000333948"/>
<dbReference type="PeptideAtlas" id="Q86WX3"/>
<dbReference type="ProteomicsDB" id="70214"/>
<dbReference type="Pumba" id="Q86WX3"/>
<dbReference type="Antibodypedia" id="51530">
    <property type="antibodies" value="135 antibodies from 25 providers"/>
</dbReference>
<dbReference type="DNASU" id="91582"/>
<dbReference type="Ensembl" id="ENST00000334678.8">
    <property type="protein sequence ID" value="ENSP00000333948.3"/>
    <property type="gene ID" value="ENSG00000187051.9"/>
</dbReference>
<dbReference type="GeneID" id="91582"/>
<dbReference type="KEGG" id="hsa:91582"/>
<dbReference type="MANE-Select" id="ENST00000334678.8">
    <property type="protein sequence ID" value="ENSP00000333948.3"/>
    <property type="RefSeq nucleotide sequence ID" value="NM_194326.4"/>
    <property type="RefSeq protein sequence ID" value="NP_919307.1"/>
</dbReference>
<dbReference type="UCSC" id="uc003ayb.3">
    <property type="organism name" value="human"/>
</dbReference>
<dbReference type="AGR" id="HGNC:28749"/>
<dbReference type="CTD" id="91582"/>
<dbReference type="DisGeNET" id="91582"/>
<dbReference type="GeneCards" id="RPS19BP1"/>
<dbReference type="HGNC" id="HGNC:28749">
    <property type="gene designation" value="RPS19BP1"/>
</dbReference>
<dbReference type="HPA" id="ENSG00000187051">
    <property type="expression patterns" value="Low tissue specificity"/>
</dbReference>
<dbReference type="MIM" id="610225">
    <property type="type" value="gene"/>
</dbReference>
<dbReference type="neXtProt" id="NX_Q86WX3"/>
<dbReference type="OpenTargets" id="ENSG00000187051"/>
<dbReference type="PharmGKB" id="PA143485599"/>
<dbReference type="VEuPathDB" id="HostDB:ENSG00000187051"/>
<dbReference type="eggNOG" id="ENOG502S1CM">
    <property type="taxonomic scope" value="Eukaryota"/>
</dbReference>
<dbReference type="GeneTree" id="ENSGT00390000016774"/>
<dbReference type="HOGENOM" id="CLU_152637_0_0_1"/>
<dbReference type="InParanoid" id="Q86WX3"/>
<dbReference type="OMA" id="KFQREYF"/>
<dbReference type="OrthoDB" id="6493910at2759"/>
<dbReference type="PAN-GO" id="Q86WX3">
    <property type="GO annotations" value="2 GO annotations based on evolutionary models"/>
</dbReference>
<dbReference type="PhylomeDB" id="Q86WX3"/>
<dbReference type="TreeFam" id="TF333429"/>
<dbReference type="PathwayCommons" id="Q86WX3"/>
<dbReference type="Reactome" id="R-HSA-3371453">
    <property type="pathway name" value="Regulation of HSF1-mediated heat shock response"/>
</dbReference>
<dbReference type="SignaLink" id="Q86WX3"/>
<dbReference type="BioGRID-ORCS" id="91582">
    <property type="hits" value="519 hits in 1162 CRISPR screens"/>
</dbReference>
<dbReference type="CD-CODE" id="91857CE7">
    <property type="entry name" value="Nucleolus"/>
</dbReference>
<dbReference type="ChiTaRS" id="RPS19BP1">
    <property type="organism name" value="human"/>
</dbReference>
<dbReference type="GenomeRNAi" id="91582"/>
<dbReference type="Pharos" id="Q86WX3">
    <property type="development level" value="Tbio"/>
</dbReference>
<dbReference type="PRO" id="PR:Q86WX3"/>
<dbReference type="Proteomes" id="UP000005640">
    <property type="component" value="Chromosome 22"/>
</dbReference>
<dbReference type="RNAct" id="Q86WX3">
    <property type="molecule type" value="protein"/>
</dbReference>
<dbReference type="Bgee" id="ENSG00000187051">
    <property type="expression patterns" value="Expressed in muscle layer of sigmoid colon and 185 other cell types or tissues"/>
</dbReference>
<dbReference type="ExpressionAtlas" id="Q86WX3">
    <property type="expression patterns" value="baseline and differential"/>
</dbReference>
<dbReference type="GO" id="GO:0005829">
    <property type="term" value="C:cytosol"/>
    <property type="evidence" value="ECO:0000314"/>
    <property type="project" value="HPA"/>
</dbReference>
<dbReference type="GO" id="GO:0005730">
    <property type="term" value="C:nucleolus"/>
    <property type="evidence" value="ECO:0000314"/>
    <property type="project" value="HPA"/>
</dbReference>
<dbReference type="GO" id="GO:0005654">
    <property type="term" value="C:nucleoplasm"/>
    <property type="evidence" value="ECO:0000314"/>
    <property type="project" value="HPA"/>
</dbReference>
<dbReference type="GO" id="GO:0032040">
    <property type="term" value="C:small-subunit processome"/>
    <property type="evidence" value="ECO:0000314"/>
    <property type="project" value="UniProtKB"/>
</dbReference>
<dbReference type="GO" id="GO:0019899">
    <property type="term" value="F:enzyme binding"/>
    <property type="evidence" value="ECO:0000353"/>
    <property type="project" value="UniProtKB"/>
</dbReference>
<dbReference type="GO" id="GO:0003723">
    <property type="term" value="F:RNA binding"/>
    <property type="evidence" value="ECO:0007005"/>
    <property type="project" value="UniProtKB"/>
</dbReference>
<dbReference type="GO" id="GO:0042274">
    <property type="term" value="P:ribosomal small subunit biogenesis"/>
    <property type="evidence" value="ECO:0000314"/>
    <property type="project" value="UniProtKB"/>
</dbReference>
<dbReference type="InterPro" id="IPR023262">
    <property type="entry name" value="AROS"/>
</dbReference>
<dbReference type="PANTHER" id="PTHR31454">
    <property type="entry name" value="ACTIVE REGULATOR OF SIRT1"/>
    <property type="match status" value="1"/>
</dbReference>
<dbReference type="PANTHER" id="PTHR31454:SF2">
    <property type="entry name" value="ACTIVE REGULATOR OF SIRT1"/>
    <property type="match status" value="1"/>
</dbReference>
<dbReference type="Pfam" id="PF15684">
    <property type="entry name" value="AROS"/>
    <property type="match status" value="1"/>
</dbReference>
<dbReference type="PRINTS" id="PR02029">
    <property type="entry name" value="ACTREGSIRT1"/>
</dbReference>
<comment type="function">
    <text evidence="3 4">Part of the small subunit (SSU) processome, first precursor of the small eukaryotic ribosomal subunit. During the assembly of the SSU processome in the nucleolus, many ribosome biogenesis factors, an RNA chaperone and ribosomal proteins associate with the nascent pre-rRNA and work in concert to generate RNA folding, modifications, rearrangements and cleavage as well as targeted degradation of pre-ribosomal RNA by the RNA exosome. Acts as a chaperone that specifically mediates the integration of RPS19 in state post-A1 (PubMed:34516797). Direct regulator of SIRT1. Enhances SIRT1-mediated deacetylation of p53/TP53, thereby participating in inhibition of p53/TP53-mediated transcriptional activity (PubMed:17964266).</text>
</comment>
<comment type="subunit">
    <text evidence="3 4">Part of the small subunit (SSU) processome, composed of more than 70 proteins and the RNA chaperone small nucleolar RNA (snoRNA) U3. Interacts with RPS19; the interaction is direct and mediates the integration of RPS19 in state post-A1 (PubMed:34516797). Interacts with SIRT1 (PubMed:17964266).</text>
</comment>
<comment type="interaction">
    <interactant intactId="EBI-4479407">
        <id>Q86WX3</id>
    </interactant>
    <interactant intactId="EBI-10173507">
        <id>Q6UY14-3</id>
        <label>ADAMTSL4</label>
    </interactant>
    <organismsDiffer>false</organismsDiffer>
    <experiments>3</experiments>
</comment>
<comment type="interaction">
    <interactant intactId="EBI-4479407">
        <id>Q86WX3</id>
    </interactant>
    <interactant intactId="EBI-3867333">
        <id>A8MQ03</id>
        <label>CYSRT1</label>
    </interactant>
    <organismsDiffer>false</organismsDiffer>
    <experiments>3</experiments>
</comment>
<comment type="interaction">
    <interactant intactId="EBI-4479407">
        <id>Q86WX3</id>
    </interactant>
    <interactant intactId="EBI-948001">
        <id>Q15323</id>
        <label>KRT31</label>
    </interactant>
    <organismsDiffer>false</organismsDiffer>
    <experiments>3</experiments>
</comment>
<comment type="interaction">
    <interactant intactId="EBI-4479407">
        <id>Q86WX3</id>
    </interactant>
    <interactant intactId="EBI-11959885">
        <id>Q07627</id>
        <label>KRTAP1-1</label>
    </interactant>
    <organismsDiffer>false</organismsDiffer>
    <experiments>3</experiments>
</comment>
<comment type="interaction">
    <interactant intactId="EBI-4479407">
        <id>Q86WX3</id>
    </interactant>
    <interactant intactId="EBI-11749135">
        <id>Q8IUG1</id>
        <label>KRTAP1-3</label>
    </interactant>
    <organismsDiffer>false</organismsDiffer>
    <experiments>3</experiments>
</comment>
<comment type="interaction">
    <interactant intactId="EBI-4479407">
        <id>Q86WX3</id>
    </interactant>
    <interactant intactId="EBI-10171774">
        <id>P60410</id>
        <label>KRTAP10-8</label>
    </interactant>
    <organismsDiffer>false</organismsDiffer>
    <experiments>3</experiments>
</comment>
<comment type="interaction">
    <interactant intactId="EBI-4479407">
        <id>Q86WX3</id>
    </interactant>
    <interactant intactId="EBI-11522433">
        <id>Q5JR59-3</id>
        <label>MTUS2</label>
    </interactant>
    <organismsDiffer>false</organismsDiffer>
    <experiments>3</experiments>
</comment>
<comment type="interaction">
    <interactant intactId="EBI-4479407">
        <id>Q86WX3</id>
    </interactant>
    <interactant intactId="EBI-22310682">
        <id>P0DPK4</id>
        <label>NOTCH2NLC</label>
    </interactant>
    <organismsDiffer>false</organismsDiffer>
    <experiments>3</experiments>
</comment>
<comment type="interaction">
    <interactant intactId="EBI-4479407">
        <id>Q86WX3</id>
    </interactant>
    <interactant intactId="EBI-747107">
        <id>Q8IUQ4</id>
        <label>SIAH1</label>
    </interactant>
    <organismsDiffer>false</organismsDiffer>
    <experiments>3</experiments>
</comment>
<comment type="interaction">
    <interactant intactId="EBI-4479407">
        <id>Q86WX3</id>
    </interactant>
    <interactant intactId="EBI-1802965">
        <id>Q96EB6</id>
        <label>SIRT1</label>
    </interactant>
    <organismsDiffer>false</organismsDiffer>
    <experiments>11</experiments>
</comment>
<comment type="subcellular location">
    <subcellularLocation>
        <location evidence="3 4">Nucleus</location>
        <location evidence="3 4">Nucleolus</location>
    </subcellularLocation>
</comment>
<comment type="tissue specificity">
    <text evidence="3">Widely expressed (at protein level).</text>
</comment>
<comment type="PTM">
    <text evidence="1">Citrullinated by PADI4.</text>
</comment>
<comment type="similarity">
    <text evidence="6">Belongs to the AROS family.</text>
</comment>
<evidence type="ECO:0000250" key="1"/>
<evidence type="ECO:0000256" key="2">
    <source>
        <dbReference type="SAM" id="MobiDB-lite"/>
    </source>
</evidence>
<evidence type="ECO:0000269" key="3">
    <source>
    </source>
</evidence>
<evidence type="ECO:0000269" key="4">
    <source>
    </source>
</evidence>
<evidence type="ECO:0000303" key="5">
    <source>
    </source>
</evidence>
<evidence type="ECO:0000305" key="6"/>
<evidence type="ECO:0000312" key="7">
    <source>
        <dbReference type="HGNC" id="HGNC:28749"/>
    </source>
</evidence>
<evidence type="ECO:0007744" key="8">
    <source>
        <dbReference type="PDB" id="7MQA"/>
    </source>
</evidence>
<evidence type="ECO:0007744" key="9">
    <source>
    </source>
</evidence>
<reference key="1">
    <citation type="journal article" date="2004" name="Genome Biol.">
        <title>A genome annotation-driven approach to cloning the human ORFeome.</title>
        <authorList>
            <person name="Collins J.E."/>
            <person name="Wright C.L."/>
            <person name="Edwards C.A."/>
            <person name="Davis M.P."/>
            <person name="Grinham J.A."/>
            <person name="Cole C.G."/>
            <person name="Goward M.E."/>
            <person name="Aguado B."/>
            <person name="Mallya M."/>
            <person name="Mokrab Y."/>
            <person name="Huckle E.J."/>
            <person name="Beare D.M."/>
            <person name="Dunham I."/>
        </authorList>
    </citation>
    <scope>NUCLEOTIDE SEQUENCE [LARGE SCALE MRNA]</scope>
</reference>
<reference key="2">
    <citation type="journal article" date="1999" name="Nature">
        <title>The DNA sequence of human chromosome 22.</title>
        <authorList>
            <person name="Dunham I."/>
            <person name="Hunt A.R."/>
            <person name="Collins J.E."/>
            <person name="Bruskiewich R."/>
            <person name="Beare D.M."/>
            <person name="Clamp M."/>
            <person name="Smink L.J."/>
            <person name="Ainscough R."/>
            <person name="Almeida J.P."/>
            <person name="Babbage A.K."/>
            <person name="Bagguley C."/>
            <person name="Bailey J."/>
            <person name="Barlow K.F."/>
            <person name="Bates K.N."/>
            <person name="Beasley O.P."/>
            <person name="Bird C.P."/>
            <person name="Blakey S.E."/>
            <person name="Bridgeman A.M."/>
            <person name="Buck D."/>
            <person name="Burgess J."/>
            <person name="Burrill W.D."/>
            <person name="Burton J."/>
            <person name="Carder C."/>
            <person name="Carter N.P."/>
            <person name="Chen Y."/>
            <person name="Clark G."/>
            <person name="Clegg S.M."/>
            <person name="Cobley V.E."/>
            <person name="Cole C.G."/>
            <person name="Collier R.E."/>
            <person name="Connor R."/>
            <person name="Conroy D."/>
            <person name="Corby N.R."/>
            <person name="Coville G.J."/>
            <person name="Cox A.V."/>
            <person name="Davis J."/>
            <person name="Dawson E."/>
            <person name="Dhami P.D."/>
            <person name="Dockree C."/>
            <person name="Dodsworth S.J."/>
            <person name="Durbin R.M."/>
            <person name="Ellington A.G."/>
            <person name="Evans K.L."/>
            <person name="Fey J.M."/>
            <person name="Fleming K."/>
            <person name="French L."/>
            <person name="Garner A.A."/>
            <person name="Gilbert J.G.R."/>
            <person name="Goward M.E."/>
            <person name="Grafham D.V."/>
            <person name="Griffiths M.N.D."/>
            <person name="Hall C."/>
            <person name="Hall R.E."/>
            <person name="Hall-Tamlyn G."/>
            <person name="Heathcott R.W."/>
            <person name="Ho S."/>
            <person name="Holmes S."/>
            <person name="Hunt S.E."/>
            <person name="Jones M.C."/>
            <person name="Kershaw J."/>
            <person name="Kimberley A.M."/>
            <person name="King A."/>
            <person name="Laird G.K."/>
            <person name="Langford C.F."/>
            <person name="Leversha M.A."/>
            <person name="Lloyd C."/>
            <person name="Lloyd D.M."/>
            <person name="Martyn I.D."/>
            <person name="Mashreghi-Mohammadi M."/>
            <person name="Matthews L.H."/>
            <person name="Mccann O.T."/>
            <person name="Mcclay J."/>
            <person name="Mclaren S."/>
            <person name="McMurray A.A."/>
            <person name="Milne S.A."/>
            <person name="Mortimore B.J."/>
            <person name="Odell C.N."/>
            <person name="Pavitt R."/>
            <person name="Pearce A.V."/>
            <person name="Pearson D."/>
            <person name="Phillimore B.J.C.T."/>
            <person name="Phillips S.H."/>
            <person name="Plumb R.W."/>
            <person name="Ramsay H."/>
            <person name="Ramsey Y."/>
            <person name="Rogers L."/>
            <person name="Ross M.T."/>
            <person name="Scott C.E."/>
            <person name="Sehra H.K."/>
            <person name="Skuce C.D."/>
            <person name="Smalley S."/>
            <person name="Smith M.L."/>
            <person name="Soderlund C."/>
            <person name="Spragon L."/>
            <person name="Steward C.A."/>
            <person name="Sulston J.E."/>
            <person name="Swann R.M."/>
            <person name="Vaudin M."/>
            <person name="Wall M."/>
            <person name="Wallis J.M."/>
            <person name="Whiteley M.N."/>
            <person name="Willey D.L."/>
            <person name="Williams L."/>
            <person name="Williams S.A."/>
            <person name="Williamson H."/>
            <person name="Wilmer T.E."/>
            <person name="Wilming L."/>
            <person name="Wright C.L."/>
            <person name="Hubbard T."/>
            <person name="Bentley D.R."/>
            <person name="Beck S."/>
            <person name="Rogers J."/>
            <person name="Shimizu N."/>
            <person name="Minoshima S."/>
            <person name="Kawasaki K."/>
            <person name="Sasaki T."/>
            <person name="Asakawa S."/>
            <person name="Kudoh J."/>
            <person name="Shintani A."/>
            <person name="Shibuya K."/>
            <person name="Yoshizaki Y."/>
            <person name="Aoki N."/>
            <person name="Mitsuyama S."/>
            <person name="Roe B.A."/>
            <person name="Chen F."/>
            <person name="Chu L."/>
            <person name="Crabtree J."/>
            <person name="Deschamps S."/>
            <person name="Do A."/>
            <person name="Do T."/>
            <person name="Dorman A."/>
            <person name="Fang F."/>
            <person name="Fu Y."/>
            <person name="Hu P."/>
            <person name="Hua A."/>
            <person name="Kenton S."/>
            <person name="Lai H."/>
            <person name="Lao H.I."/>
            <person name="Lewis J."/>
            <person name="Lewis S."/>
            <person name="Lin S.-P."/>
            <person name="Loh P."/>
            <person name="Malaj E."/>
            <person name="Nguyen T."/>
            <person name="Pan H."/>
            <person name="Phan S."/>
            <person name="Qi S."/>
            <person name="Qian Y."/>
            <person name="Ray L."/>
            <person name="Ren Q."/>
            <person name="Shaull S."/>
            <person name="Sloan D."/>
            <person name="Song L."/>
            <person name="Wang Q."/>
            <person name="Wang Y."/>
            <person name="Wang Z."/>
            <person name="White J."/>
            <person name="Willingham D."/>
            <person name="Wu H."/>
            <person name="Yao Z."/>
            <person name="Zhan M."/>
            <person name="Zhang G."/>
            <person name="Chissoe S."/>
            <person name="Murray J."/>
            <person name="Miller N."/>
            <person name="Minx P."/>
            <person name="Fulton R."/>
            <person name="Johnson D."/>
            <person name="Bemis G."/>
            <person name="Bentley D."/>
            <person name="Bradshaw H."/>
            <person name="Bourne S."/>
            <person name="Cordes M."/>
            <person name="Du Z."/>
            <person name="Fulton L."/>
            <person name="Goela D."/>
            <person name="Graves T."/>
            <person name="Hawkins J."/>
            <person name="Hinds K."/>
            <person name="Kemp K."/>
            <person name="Latreille P."/>
            <person name="Layman D."/>
            <person name="Ozersky P."/>
            <person name="Rohlfing T."/>
            <person name="Scheet P."/>
            <person name="Walker C."/>
            <person name="Wamsley A."/>
            <person name="Wohldmann P."/>
            <person name="Pepin K."/>
            <person name="Nelson J."/>
            <person name="Korf I."/>
            <person name="Bedell J.A."/>
            <person name="Hillier L.W."/>
            <person name="Mardis E."/>
            <person name="Waterston R."/>
            <person name="Wilson R."/>
            <person name="Emanuel B.S."/>
            <person name="Shaikh T."/>
            <person name="Kurahashi H."/>
            <person name="Saitta S."/>
            <person name="Budarf M.L."/>
            <person name="McDermid H.E."/>
            <person name="Johnson A."/>
            <person name="Wong A.C.C."/>
            <person name="Morrow B.E."/>
            <person name="Edelmann L."/>
            <person name="Kim U.J."/>
            <person name="Shizuya H."/>
            <person name="Simon M.I."/>
            <person name="Dumanski J.P."/>
            <person name="Peyrard M."/>
            <person name="Kedra D."/>
            <person name="Seroussi E."/>
            <person name="Fransson I."/>
            <person name="Tapia I."/>
            <person name="Bruder C.E."/>
            <person name="O'Brien K.P."/>
            <person name="Wilkinson P."/>
            <person name="Bodenteich A."/>
            <person name="Hartman K."/>
            <person name="Hu X."/>
            <person name="Khan A.S."/>
            <person name="Lane L."/>
            <person name="Tilahun Y."/>
            <person name="Wright H."/>
        </authorList>
    </citation>
    <scope>NUCLEOTIDE SEQUENCE [LARGE SCALE GENOMIC DNA]</scope>
</reference>
<reference key="3">
    <citation type="submission" date="2005-07" db="EMBL/GenBank/DDBJ databases">
        <authorList>
            <person name="Mural R.J."/>
            <person name="Istrail S."/>
            <person name="Sutton G.G."/>
            <person name="Florea L."/>
            <person name="Halpern A.L."/>
            <person name="Mobarry C.M."/>
            <person name="Lippert R."/>
            <person name="Walenz B."/>
            <person name="Shatkay H."/>
            <person name="Dew I."/>
            <person name="Miller J.R."/>
            <person name="Flanigan M.J."/>
            <person name="Edwards N.J."/>
            <person name="Bolanos R."/>
            <person name="Fasulo D."/>
            <person name="Halldorsson B.V."/>
            <person name="Hannenhalli S."/>
            <person name="Turner R."/>
            <person name="Yooseph S."/>
            <person name="Lu F."/>
            <person name="Nusskern D.R."/>
            <person name="Shue B.C."/>
            <person name="Zheng X.H."/>
            <person name="Zhong F."/>
            <person name="Delcher A.L."/>
            <person name="Huson D.H."/>
            <person name="Kravitz S.A."/>
            <person name="Mouchard L."/>
            <person name="Reinert K."/>
            <person name="Remington K.A."/>
            <person name="Clark A.G."/>
            <person name="Waterman M.S."/>
            <person name="Eichler E.E."/>
            <person name="Adams M.D."/>
            <person name="Hunkapiller M.W."/>
            <person name="Myers E.W."/>
            <person name="Venter J.C."/>
        </authorList>
    </citation>
    <scope>NUCLEOTIDE SEQUENCE [LARGE SCALE GENOMIC DNA]</scope>
</reference>
<reference key="4">
    <citation type="journal article" date="2004" name="Genome Res.">
        <title>The status, quality, and expansion of the NIH full-length cDNA project: the Mammalian Gene Collection (MGC).</title>
        <authorList>
            <consortium name="The MGC Project Team"/>
        </authorList>
    </citation>
    <scope>NUCLEOTIDE SEQUENCE [LARGE SCALE MRNA]</scope>
    <source>
        <tissue>Mammary gland</tissue>
        <tissue>Skin</tissue>
    </source>
</reference>
<reference key="5">
    <citation type="journal article" date="2007" name="Mol. Cell">
        <title>Active regulator of SIRT1 cooperates with SIRT1 and facilitates suppression of p53 activity.</title>
        <authorList>
            <person name="Kim E.-J."/>
            <person name="Kho J.-H."/>
            <person name="Kang M.-R."/>
            <person name="Um S.-J."/>
        </authorList>
    </citation>
    <scope>FUNCTION</scope>
    <scope>SUBCELLULAR LOCATION</scope>
    <scope>TISSUE SPECIFICITY</scope>
    <scope>INTERACTION WITH SIRT1</scope>
</reference>
<reference key="6">
    <citation type="journal article" date="2007" name="Mol. Cell">
        <authorList>
            <person name="Kim E.-J."/>
            <person name="Kho J.-H."/>
            <person name="Kang M.-R."/>
            <person name="Um S.-J."/>
        </authorList>
    </citation>
    <scope>ERRATUM OF PUBMED:17964266</scope>
</reference>
<reference key="7">
    <citation type="journal article" date="2009" name="Sci. Signal.">
        <title>Quantitative phosphoproteomic analysis of T cell receptor signaling reveals system-wide modulation of protein-protein interactions.</title>
        <authorList>
            <person name="Mayya V."/>
            <person name="Lundgren D.H."/>
            <person name="Hwang S.-I."/>
            <person name="Rezaul K."/>
            <person name="Wu L."/>
            <person name="Eng J.K."/>
            <person name="Rodionov V."/>
            <person name="Han D.K."/>
        </authorList>
    </citation>
    <scope>IDENTIFICATION BY MASS SPECTROMETRY [LARGE SCALE ANALYSIS]</scope>
    <source>
        <tissue>Leukemic T-cell</tissue>
    </source>
</reference>
<reference key="8">
    <citation type="journal article" date="2011" name="BMC Syst. Biol.">
        <title>Initial characterization of the human central proteome.</title>
        <authorList>
            <person name="Burkard T.R."/>
            <person name="Planyavsky M."/>
            <person name="Kaupe I."/>
            <person name="Breitwieser F.P."/>
            <person name="Buerckstuemmer T."/>
            <person name="Bennett K.L."/>
            <person name="Superti-Furga G."/>
            <person name="Colinge J."/>
        </authorList>
    </citation>
    <scope>IDENTIFICATION BY MASS SPECTROMETRY [LARGE SCALE ANALYSIS]</scope>
</reference>
<reference key="9">
    <citation type="journal article" date="2013" name="J. Proteome Res.">
        <title>Toward a comprehensive characterization of a human cancer cell phosphoproteome.</title>
        <authorList>
            <person name="Zhou H."/>
            <person name="Di Palma S."/>
            <person name="Preisinger C."/>
            <person name="Peng M."/>
            <person name="Polat A.N."/>
            <person name="Heck A.J."/>
            <person name="Mohammed S."/>
        </authorList>
    </citation>
    <scope>PHOSPHORYLATION [LARGE SCALE ANALYSIS] AT SER-84</scope>
    <scope>IDENTIFICATION BY MASS SPECTROMETRY [LARGE SCALE ANALYSIS]</scope>
    <source>
        <tissue>Erythroleukemia</tissue>
    </source>
</reference>
<reference evidence="8" key="10">
    <citation type="journal article" date="2021" name="Science">
        <title>Nucleolar maturation of the human small subunit processome.</title>
        <authorList>
            <person name="Singh S."/>
            <person name="Vanden Broeck A."/>
            <person name="Miller L."/>
            <person name="Chaker-Margot M."/>
            <person name="Klinge S."/>
        </authorList>
    </citation>
    <scope>STRUCTURE BY ELECTRON MICROSCOPY (2.70 ANGSTROMS)</scope>
    <scope>FUNCTION</scope>
    <scope>SUBCELLULAR LOCATION</scope>
    <scope>SUBUNIT</scope>
</reference>
<accession>Q86WX3</accession>
<accession>B0QY96</accession>
<accession>Q5JZA1</accession>